<organism>
    <name type="scientific">Listeria monocytogenes serotype 4b (strain F2365)</name>
    <dbReference type="NCBI Taxonomy" id="265669"/>
    <lineage>
        <taxon>Bacteria</taxon>
        <taxon>Bacillati</taxon>
        <taxon>Bacillota</taxon>
        <taxon>Bacilli</taxon>
        <taxon>Bacillales</taxon>
        <taxon>Listeriaceae</taxon>
        <taxon>Listeria</taxon>
    </lineage>
</organism>
<evidence type="ECO:0000256" key="1">
    <source>
        <dbReference type="SAM" id="MobiDB-lite"/>
    </source>
</evidence>
<evidence type="ECO:0000305" key="2"/>
<comment type="similarity">
    <text evidence="2">Belongs to the UPF0337 (CsbD) family.</text>
</comment>
<accession>Q71XK8</accession>
<reference key="1">
    <citation type="journal article" date="2004" name="Nucleic Acids Res.">
        <title>Whole genome comparisons of serotype 4b and 1/2a strains of the food-borne pathogen Listeria monocytogenes reveal new insights into the core genome components of this species.</title>
        <authorList>
            <person name="Nelson K.E."/>
            <person name="Fouts D.E."/>
            <person name="Mongodin E.F."/>
            <person name="Ravel J."/>
            <person name="DeBoy R.T."/>
            <person name="Kolonay J.F."/>
            <person name="Rasko D.A."/>
            <person name="Angiuoli S.V."/>
            <person name="Gill S.R."/>
            <person name="Paulsen I.T."/>
            <person name="Peterson J.D."/>
            <person name="White O."/>
            <person name="Nelson W.C."/>
            <person name="Nierman W.C."/>
            <person name="Beanan M.J."/>
            <person name="Brinkac L.M."/>
            <person name="Daugherty S.C."/>
            <person name="Dodson R.J."/>
            <person name="Durkin A.S."/>
            <person name="Madupu R."/>
            <person name="Haft D.H."/>
            <person name="Selengut J."/>
            <person name="Van Aken S.E."/>
            <person name="Khouri H.M."/>
            <person name="Fedorova N."/>
            <person name="Forberger H.A."/>
            <person name="Tran B."/>
            <person name="Kathariou S."/>
            <person name="Wonderling L.D."/>
            <person name="Uhlich G.A."/>
            <person name="Bayles D.O."/>
            <person name="Luchansky J.B."/>
            <person name="Fraser C.M."/>
        </authorList>
    </citation>
    <scope>NUCLEOTIDE SEQUENCE [LARGE SCALE GENOMIC DNA]</scope>
    <source>
        <strain>F2365</strain>
    </source>
</reference>
<dbReference type="EMBL" id="AE017262">
    <property type="protein sequence ID" value="AAT04957.1"/>
    <property type="molecule type" value="Genomic_DNA"/>
</dbReference>
<dbReference type="RefSeq" id="WP_003722282.1">
    <property type="nucleotide sequence ID" value="NC_002973.6"/>
</dbReference>
<dbReference type="SMR" id="Q71XK8"/>
<dbReference type="KEGG" id="lmf:LMOf2365_2190"/>
<dbReference type="HOGENOM" id="CLU_135567_3_0_9"/>
<dbReference type="Gene3D" id="1.10.1470.10">
    <property type="entry name" value="YjbJ"/>
    <property type="match status" value="1"/>
</dbReference>
<dbReference type="InterPro" id="IPR008462">
    <property type="entry name" value="CsbD"/>
</dbReference>
<dbReference type="InterPro" id="IPR036629">
    <property type="entry name" value="YjbJ_sf"/>
</dbReference>
<dbReference type="Pfam" id="PF05532">
    <property type="entry name" value="CsbD"/>
    <property type="match status" value="1"/>
</dbReference>
<dbReference type="SUPFAM" id="SSF69047">
    <property type="entry name" value="Hypothetical protein YjbJ"/>
    <property type="match status" value="1"/>
</dbReference>
<gene>
    <name type="ordered locus">LMOf2365_2190</name>
</gene>
<name>Y2190_LISMF</name>
<proteinExistence type="inferred from homology"/>
<protein>
    <recommendedName>
        <fullName>UPF0337 protein LMOf2365_2190</fullName>
    </recommendedName>
</protein>
<sequence length="61" mass="6554">MSEDKGMKDKAKGLKDKVVGDAKDKFGKATDDKGKQVEGKAQKAKGEVEDKTGDAKKKLSE</sequence>
<feature type="chain" id="PRO_0000210009" description="UPF0337 protein LMOf2365_2190">
    <location>
        <begin position="1"/>
        <end position="61"/>
    </location>
</feature>
<feature type="region of interest" description="Disordered" evidence="1">
    <location>
        <begin position="1"/>
        <end position="61"/>
    </location>
</feature>